<proteinExistence type="inferred from homology"/>
<feature type="signal peptide">
    <location>
        <begin position="1"/>
        <end position="16"/>
    </location>
</feature>
<feature type="chain" id="PRO_0000011207" description="Globin CTT-W">
    <location>
        <begin position="17"/>
        <end position="159"/>
    </location>
</feature>
<feature type="domain" description="Globin" evidence="1">
    <location>
        <begin position="17"/>
        <end position="159"/>
    </location>
</feature>
<feature type="binding site" description="distal binding residue" evidence="1">
    <location>
        <position position="73"/>
    </location>
    <ligand>
        <name>heme b</name>
        <dbReference type="ChEBI" id="CHEBI:60344"/>
    </ligand>
    <ligandPart>
        <name>Fe</name>
        <dbReference type="ChEBI" id="CHEBI:18248"/>
    </ligandPart>
</feature>
<feature type="binding site" description="proximal binding residue" evidence="1">
    <location>
        <position position="108"/>
    </location>
    <ligand>
        <name>heme b</name>
        <dbReference type="ChEBI" id="CHEBI:60344"/>
    </ligand>
    <ligandPart>
        <name>Fe</name>
        <dbReference type="ChEBI" id="CHEBI:18248"/>
    </ligandPart>
</feature>
<sequence>MKFLVILTLCIAGAIAHCDKAPFIKASWNQVKHNEVDILYTVFKAYPEIQDRFPQFAGKDLEAIKETAEFAVHSTRIVSFMSEIVSLVGNPAVQSSIDLLLVKMANDHKARGVTKELFEKFNIAFMGYLKSHTTWDKKTENAWKVVGDEHHAIVYSILE</sequence>
<reference key="1">
    <citation type="journal article" date="1995" name="J. Mol. Evol.">
        <title>Molecular evolutionary analysis of the YWVZ/7B globin gene cluster of the insect Chironomus thummi.</title>
        <authorList>
            <person name="Trewitt P.M."/>
            <person name="Luhm R.A."/>
            <person name="Samad F."/>
            <person name="Ramakrishnan S."/>
            <person name="Kao W.-Y."/>
            <person name="Bergtrom G."/>
        </authorList>
    </citation>
    <scope>NUCLEOTIDE SEQUENCE [GENOMIC DNA]</scope>
</reference>
<name>GLBW_CHITH</name>
<gene>
    <name type="primary">CTT-W</name>
</gene>
<keyword id="KW-0349">Heme</keyword>
<keyword id="KW-0408">Iron</keyword>
<keyword id="KW-0479">Metal-binding</keyword>
<keyword id="KW-0561">Oxygen transport</keyword>
<keyword id="KW-0732">Signal</keyword>
<keyword id="KW-0813">Transport</keyword>
<dbReference type="EMBL" id="U07703">
    <property type="protein sequence ID" value="AAA85483.1"/>
    <property type="molecule type" value="Genomic_DNA"/>
</dbReference>
<dbReference type="SMR" id="Q23760"/>
<dbReference type="GO" id="GO:0005576">
    <property type="term" value="C:extracellular region"/>
    <property type="evidence" value="ECO:0007669"/>
    <property type="project" value="InterPro"/>
</dbReference>
<dbReference type="GO" id="GO:0005833">
    <property type="term" value="C:hemoglobin complex"/>
    <property type="evidence" value="ECO:0007669"/>
    <property type="project" value="InterPro"/>
</dbReference>
<dbReference type="GO" id="GO:0020037">
    <property type="term" value="F:heme binding"/>
    <property type="evidence" value="ECO:0007669"/>
    <property type="project" value="InterPro"/>
</dbReference>
<dbReference type="GO" id="GO:0046872">
    <property type="term" value="F:metal ion binding"/>
    <property type="evidence" value="ECO:0007669"/>
    <property type="project" value="UniProtKB-KW"/>
</dbReference>
<dbReference type="GO" id="GO:0019825">
    <property type="term" value="F:oxygen binding"/>
    <property type="evidence" value="ECO:0007669"/>
    <property type="project" value="InterPro"/>
</dbReference>
<dbReference type="GO" id="GO:0005344">
    <property type="term" value="F:oxygen carrier activity"/>
    <property type="evidence" value="ECO:0007669"/>
    <property type="project" value="UniProtKB-KW"/>
</dbReference>
<dbReference type="CDD" id="cd01040">
    <property type="entry name" value="Mb-like"/>
    <property type="match status" value="1"/>
</dbReference>
<dbReference type="Gene3D" id="1.10.490.10">
    <property type="entry name" value="Globins"/>
    <property type="match status" value="1"/>
</dbReference>
<dbReference type="InterPro" id="IPR002336">
    <property type="entry name" value="Erythrocruorin"/>
</dbReference>
<dbReference type="InterPro" id="IPR000971">
    <property type="entry name" value="Globin"/>
</dbReference>
<dbReference type="InterPro" id="IPR009050">
    <property type="entry name" value="Globin-like_sf"/>
</dbReference>
<dbReference type="InterPro" id="IPR012292">
    <property type="entry name" value="Globin/Proto"/>
</dbReference>
<dbReference type="InterPro" id="IPR044399">
    <property type="entry name" value="Mb-like_M"/>
</dbReference>
<dbReference type="PANTHER" id="PTHR47217">
    <property type="entry name" value="GLOBIN-LIKE PROTEIN"/>
    <property type="match status" value="1"/>
</dbReference>
<dbReference type="PANTHER" id="PTHR47217:SF1">
    <property type="entry name" value="GLOBIN-LIKE PROTEIN"/>
    <property type="match status" value="1"/>
</dbReference>
<dbReference type="Pfam" id="PF00042">
    <property type="entry name" value="Globin"/>
    <property type="match status" value="1"/>
</dbReference>
<dbReference type="PRINTS" id="PR00611">
    <property type="entry name" value="ERYTHCRUORIN"/>
</dbReference>
<dbReference type="SUPFAM" id="SSF46458">
    <property type="entry name" value="Globin-like"/>
    <property type="match status" value="1"/>
</dbReference>
<dbReference type="PROSITE" id="PS01033">
    <property type="entry name" value="GLOBIN"/>
    <property type="match status" value="1"/>
</dbReference>
<evidence type="ECO:0000255" key="1">
    <source>
        <dbReference type="PROSITE-ProRule" id="PRU00238"/>
    </source>
</evidence>
<organism>
    <name type="scientific">Chironomus thummi thummi</name>
    <name type="common">Midge</name>
    <dbReference type="NCBI Taxonomy" id="7155"/>
    <lineage>
        <taxon>Eukaryota</taxon>
        <taxon>Metazoa</taxon>
        <taxon>Ecdysozoa</taxon>
        <taxon>Arthropoda</taxon>
        <taxon>Hexapoda</taxon>
        <taxon>Insecta</taxon>
        <taxon>Pterygota</taxon>
        <taxon>Neoptera</taxon>
        <taxon>Endopterygota</taxon>
        <taxon>Diptera</taxon>
        <taxon>Nematocera</taxon>
        <taxon>Chironomoidea</taxon>
        <taxon>Chironomidae</taxon>
        <taxon>Chironominae</taxon>
        <taxon>Chironomus</taxon>
    </lineage>
</organism>
<accession>Q23760</accession>
<protein>
    <recommendedName>
        <fullName>Globin CTT-W</fullName>
    </recommendedName>
    <alternativeName>
        <fullName>HBW</fullName>
    </alternativeName>
</protein>
<comment type="miscellaneous">
    <text>There are at least 12 different components in Midge globin.</text>
</comment>
<comment type="similarity">
    <text evidence="1">Belongs to the globin family.</text>
</comment>